<proteinExistence type="inferred from homology"/>
<gene>
    <name evidence="1" type="primary">pth</name>
    <name type="ordered locus">NT01CX_1019</name>
</gene>
<reference key="1">
    <citation type="journal article" date="2006" name="Nat. Biotechnol.">
        <title>The genome and transcriptomes of the anti-tumor agent Clostridium novyi-NT.</title>
        <authorList>
            <person name="Bettegowda C."/>
            <person name="Huang X."/>
            <person name="Lin J."/>
            <person name="Cheong I."/>
            <person name="Kohli M."/>
            <person name="Szabo S.A."/>
            <person name="Zhang X."/>
            <person name="Diaz L.A. Jr."/>
            <person name="Velculescu V.E."/>
            <person name="Parmigiani G."/>
            <person name="Kinzler K.W."/>
            <person name="Vogelstein B."/>
            <person name="Zhou S."/>
        </authorList>
    </citation>
    <scope>NUCLEOTIDE SEQUENCE [LARGE SCALE GENOMIC DNA]</scope>
    <source>
        <strain>NT</strain>
    </source>
</reference>
<keyword id="KW-0963">Cytoplasm</keyword>
<keyword id="KW-0378">Hydrolase</keyword>
<keyword id="KW-1185">Reference proteome</keyword>
<keyword id="KW-0694">RNA-binding</keyword>
<keyword id="KW-0820">tRNA-binding</keyword>
<name>PTH_CLONN</name>
<protein>
    <recommendedName>
        <fullName evidence="1">Peptidyl-tRNA hydrolase</fullName>
        <shortName evidence="1">Pth</shortName>
        <ecNumber evidence="1">3.1.1.29</ecNumber>
    </recommendedName>
</protein>
<feature type="chain" id="PRO_1000010586" description="Peptidyl-tRNA hydrolase">
    <location>
        <begin position="1"/>
        <end position="188"/>
    </location>
</feature>
<feature type="active site" description="Proton acceptor" evidence="1">
    <location>
        <position position="19"/>
    </location>
</feature>
<feature type="binding site" evidence="1">
    <location>
        <position position="14"/>
    </location>
    <ligand>
        <name>tRNA</name>
        <dbReference type="ChEBI" id="CHEBI:17843"/>
    </ligand>
</feature>
<feature type="binding site" evidence="1">
    <location>
        <position position="64"/>
    </location>
    <ligand>
        <name>tRNA</name>
        <dbReference type="ChEBI" id="CHEBI:17843"/>
    </ligand>
</feature>
<feature type="binding site" evidence="1">
    <location>
        <position position="66"/>
    </location>
    <ligand>
        <name>tRNA</name>
        <dbReference type="ChEBI" id="CHEBI:17843"/>
    </ligand>
</feature>
<feature type="binding site" evidence="1">
    <location>
        <position position="112"/>
    </location>
    <ligand>
        <name>tRNA</name>
        <dbReference type="ChEBI" id="CHEBI:17843"/>
    </ligand>
</feature>
<feature type="site" description="Discriminates between blocked and unblocked aminoacyl-tRNA" evidence="1">
    <location>
        <position position="9"/>
    </location>
</feature>
<feature type="site" description="Stabilizes the basic form of H active site to accept a proton" evidence="1">
    <location>
        <position position="91"/>
    </location>
</feature>
<comment type="function">
    <text evidence="1">Hydrolyzes ribosome-free peptidyl-tRNAs (with 1 or more amino acids incorporated), which drop off the ribosome during protein synthesis, or as a result of ribosome stalling.</text>
</comment>
<comment type="function">
    <text evidence="1">Catalyzes the release of premature peptidyl moieties from peptidyl-tRNA molecules trapped in stalled 50S ribosomal subunits, and thus maintains levels of free tRNAs and 50S ribosomes.</text>
</comment>
<comment type="catalytic activity">
    <reaction evidence="1">
        <text>an N-acyl-L-alpha-aminoacyl-tRNA + H2O = an N-acyl-L-amino acid + a tRNA + H(+)</text>
        <dbReference type="Rhea" id="RHEA:54448"/>
        <dbReference type="Rhea" id="RHEA-COMP:10123"/>
        <dbReference type="Rhea" id="RHEA-COMP:13883"/>
        <dbReference type="ChEBI" id="CHEBI:15377"/>
        <dbReference type="ChEBI" id="CHEBI:15378"/>
        <dbReference type="ChEBI" id="CHEBI:59874"/>
        <dbReference type="ChEBI" id="CHEBI:78442"/>
        <dbReference type="ChEBI" id="CHEBI:138191"/>
        <dbReference type="EC" id="3.1.1.29"/>
    </reaction>
</comment>
<comment type="subunit">
    <text evidence="1">Monomer.</text>
</comment>
<comment type="subcellular location">
    <subcellularLocation>
        <location evidence="1">Cytoplasm</location>
    </subcellularLocation>
</comment>
<comment type="similarity">
    <text evidence="1">Belongs to the PTH family.</text>
</comment>
<sequence length="188" mass="20960">MFLIVGLGNPGKEYEHTRHNVGFDIIDVISEKYNIDLNKKKFKGMYGDGTIANEKVILLKPLTYMNLSGESIKEVTDFYKIPKENVIVIYDDISLEVGRMRIREKGSAGGHNGIKNIIAHFGSDVFPRIKVGVGQPVQRDLVSHVLGKFNKDDREILSKVFEAASDAAENIIEKGTAEAMNKFNGFKA</sequence>
<evidence type="ECO:0000255" key="1">
    <source>
        <dbReference type="HAMAP-Rule" id="MF_00083"/>
    </source>
</evidence>
<organism>
    <name type="scientific">Clostridium novyi (strain NT)</name>
    <dbReference type="NCBI Taxonomy" id="386415"/>
    <lineage>
        <taxon>Bacteria</taxon>
        <taxon>Bacillati</taxon>
        <taxon>Bacillota</taxon>
        <taxon>Clostridia</taxon>
        <taxon>Eubacteriales</taxon>
        <taxon>Clostridiaceae</taxon>
        <taxon>Clostridium</taxon>
    </lineage>
</organism>
<accession>A0PXL3</accession>
<dbReference type="EC" id="3.1.1.29" evidence="1"/>
<dbReference type="EMBL" id="CP000382">
    <property type="protein sequence ID" value="ABK62203.1"/>
    <property type="molecule type" value="Genomic_DNA"/>
</dbReference>
<dbReference type="RefSeq" id="WP_011721136.1">
    <property type="nucleotide sequence ID" value="NC_008593.1"/>
</dbReference>
<dbReference type="SMR" id="A0PXL3"/>
<dbReference type="STRING" id="386415.NT01CX_1019"/>
<dbReference type="KEGG" id="cno:NT01CX_1019"/>
<dbReference type="eggNOG" id="COG0193">
    <property type="taxonomic scope" value="Bacteria"/>
</dbReference>
<dbReference type="HOGENOM" id="CLU_062456_4_1_9"/>
<dbReference type="Proteomes" id="UP000008220">
    <property type="component" value="Chromosome"/>
</dbReference>
<dbReference type="GO" id="GO:0005737">
    <property type="term" value="C:cytoplasm"/>
    <property type="evidence" value="ECO:0007669"/>
    <property type="project" value="UniProtKB-SubCell"/>
</dbReference>
<dbReference type="GO" id="GO:0004045">
    <property type="term" value="F:peptidyl-tRNA hydrolase activity"/>
    <property type="evidence" value="ECO:0007669"/>
    <property type="project" value="UniProtKB-UniRule"/>
</dbReference>
<dbReference type="GO" id="GO:0000049">
    <property type="term" value="F:tRNA binding"/>
    <property type="evidence" value="ECO:0007669"/>
    <property type="project" value="UniProtKB-UniRule"/>
</dbReference>
<dbReference type="GO" id="GO:0006515">
    <property type="term" value="P:protein quality control for misfolded or incompletely synthesized proteins"/>
    <property type="evidence" value="ECO:0007669"/>
    <property type="project" value="UniProtKB-UniRule"/>
</dbReference>
<dbReference type="GO" id="GO:0072344">
    <property type="term" value="P:rescue of stalled ribosome"/>
    <property type="evidence" value="ECO:0007669"/>
    <property type="project" value="UniProtKB-UniRule"/>
</dbReference>
<dbReference type="CDD" id="cd00462">
    <property type="entry name" value="PTH"/>
    <property type="match status" value="1"/>
</dbReference>
<dbReference type="FunFam" id="3.40.50.1470:FF:000001">
    <property type="entry name" value="Peptidyl-tRNA hydrolase"/>
    <property type="match status" value="1"/>
</dbReference>
<dbReference type="Gene3D" id="3.40.50.1470">
    <property type="entry name" value="Peptidyl-tRNA hydrolase"/>
    <property type="match status" value="1"/>
</dbReference>
<dbReference type="HAMAP" id="MF_00083">
    <property type="entry name" value="Pept_tRNA_hydro_bact"/>
    <property type="match status" value="1"/>
</dbReference>
<dbReference type="InterPro" id="IPR001328">
    <property type="entry name" value="Pept_tRNA_hydro"/>
</dbReference>
<dbReference type="InterPro" id="IPR018171">
    <property type="entry name" value="Pept_tRNA_hydro_CS"/>
</dbReference>
<dbReference type="InterPro" id="IPR036416">
    <property type="entry name" value="Pept_tRNA_hydro_sf"/>
</dbReference>
<dbReference type="NCBIfam" id="TIGR00447">
    <property type="entry name" value="pth"/>
    <property type="match status" value="1"/>
</dbReference>
<dbReference type="PANTHER" id="PTHR17224">
    <property type="entry name" value="PEPTIDYL-TRNA HYDROLASE"/>
    <property type="match status" value="1"/>
</dbReference>
<dbReference type="PANTHER" id="PTHR17224:SF1">
    <property type="entry name" value="PEPTIDYL-TRNA HYDROLASE"/>
    <property type="match status" value="1"/>
</dbReference>
<dbReference type="Pfam" id="PF01195">
    <property type="entry name" value="Pept_tRNA_hydro"/>
    <property type="match status" value="1"/>
</dbReference>
<dbReference type="SUPFAM" id="SSF53178">
    <property type="entry name" value="Peptidyl-tRNA hydrolase-like"/>
    <property type="match status" value="1"/>
</dbReference>
<dbReference type="PROSITE" id="PS01195">
    <property type="entry name" value="PEPT_TRNA_HYDROL_1"/>
    <property type="match status" value="1"/>
</dbReference>
<dbReference type="PROSITE" id="PS01196">
    <property type="entry name" value="PEPT_TRNA_HYDROL_2"/>
    <property type="match status" value="1"/>
</dbReference>